<protein>
    <recommendedName>
        <fullName>Variant surface glycoprotein ILTAT 1.1BC</fullName>
        <shortName>VSG</shortName>
    </recommendedName>
</protein>
<proteinExistence type="inferred from homology"/>
<reference key="1">
    <citation type="journal article" date="1982" name="Nature">
        <title>Point mutations during generation of expression-linked extra copy of trypanosome surface glycoprotein gene.</title>
        <authorList>
            <person name="Rice-Ficht A.C."/>
            <person name="Chen K.K."/>
            <person name="Donelson J.E."/>
        </authorList>
    </citation>
    <scope>NUCLEOTIDE SEQUENCE [GENOMIC DNA]</scope>
</reference>
<dbReference type="EMBL" id="V01384">
    <property type="protein sequence ID" value="CAA24674.1"/>
    <property type="molecule type" value="Genomic_DNA"/>
</dbReference>
<dbReference type="PIR" id="S07329">
    <property type="entry name" value="S07329"/>
</dbReference>
<dbReference type="SMR" id="P07208"/>
<dbReference type="GO" id="GO:0005886">
    <property type="term" value="C:plasma membrane"/>
    <property type="evidence" value="ECO:0007669"/>
    <property type="project" value="UniProtKB-SubCell"/>
</dbReference>
<dbReference type="GO" id="GO:0098552">
    <property type="term" value="C:side of membrane"/>
    <property type="evidence" value="ECO:0007669"/>
    <property type="project" value="UniProtKB-KW"/>
</dbReference>
<dbReference type="Gene3D" id="4.10.110.20">
    <property type="entry name" value="Variant surface glycoprotein MITAT 1.2, VSG 221, C-terminal domain"/>
    <property type="match status" value="1"/>
</dbReference>
<dbReference type="InterPro" id="IPR027446">
    <property type="entry name" value="VSG_C_dom_sf"/>
</dbReference>
<dbReference type="SUPFAM" id="SSF58087">
    <property type="entry name" value="Variant surface glycoprotein (N-terminal domain)"/>
    <property type="match status" value="1"/>
</dbReference>
<dbReference type="SUPFAM" id="SSF118251">
    <property type="entry name" value="Variant surface glycoprotein MITAT 1.2, VSG 221, C-terminal domain"/>
    <property type="match status" value="1"/>
</dbReference>
<name>VSIB_TRYBB</name>
<organism>
    <name type="scientific">Trypanosoma brucei brucei</name>
    <dbReference type="NCBI Taxonomy" id="5702"/>
    <lineage>
        <taxon>Eukaryota</taxon>
        <taxon>Discoba</taxon>
        <taxon>Euglenozoa</taxon>
        <taxon>Kinetoplastea</taxon>
        <taxon>Metakinetoplastina</taxon>
        <taxon>Trypanosomatida</taxon>
        <taxon>Trypanosomatidae</taxon>
        <taxon>Trypanosoma</taxon>
    </lineage>
</organism>
<evidence type="ECO:0000250" key="1"/>
<evidence type="ECO:0000255" key="2"/>
<evidence type="ECO:0000256" key="3">
    <source>
        <dbReference type="SAM" id="MobiDB-lite"/>
    </source>
</evidence>
<sequence length="471" mass="50521">MVKAIASLMLLHIWAIEEIKAERQAPSVSRTECTTPCRCAQRLEKLKKHCQMRVQTAVRKQKENGKLAQKLLIGTITSTAGGGEQTSTTSFLLSNSSPTRRETLETNQAEIMSQLEHIIAMEAQYYAILNVSATSTDTTLDGDGTQYNTGSITSGGFTVSKTTECNTESPEDTKEPDQTTLSKKQGLKDLKLALRVKVACKNGGGACSAASSSDKIHITNETDSKNKGTTASTMNSQNTAVAFATDLQIVNWKSDHIDSNITALANALTALDSIPDLTDPAAYTADAAFKQLVATVTLNKPPTTELTGEVLDAVNRACADNYGTSASELTTKIWDPLNEQAASYYSDKTIKTDQLKLLTSNQQLTTALGVALAKAINVKEASKKECNLHGHETDATCEAKGVGDNCKPPCKEVEEGGKKKCKLDKEEAKRVAEQAATNQETEGKDGKTTNTTGSNSFLINKAPVLLAFLLL</sequence>
<keyword id="KW-1003">Cell membrane</keyword>
<keyword id="KW-1015">Disulfide bond</keyword>
<keyword id="KW-0325">Glycoprotein</keyword>
<keyword id="KW-0336">GPI-anchor</keyword>
<keyword id="KW-0449">Lipoprotein</keyword>
<keyword id="KW-0472">Membrane</keyword>
<keyword id="KW-0732">Signal</keyword>
<keyword id="KW-0821">Trypanosomiasis</keyword>
<comment type="function">
    <text>VSG forms a coat on the surface of the parasite. The trypanosome evades the immune response of the host by expressing a series of antigenically distinct VSGs from an estimated 1000 VSG genes.</text>
</comment>
<comment type="subcellular location">
    <subcellularLocation>
        <location>Cell membrane</location>
        <topology>Lipid-anchor</topology>
        <topology>GPI-anchor</topology>
    </subcellularLocation>
    <text evidence="1">A soluble form is released from ruptured cells by the action of a PI-PLC.</text>
</comment>
<accession>P07208</accession>
<feature type="signal peptide" evidence="2">
    <location>
        <begin position="1"/>
        <end position="21"/>
    </location>
</feature>
<feature type="chain" id="PRO_0000036415" description="Variant surface glycoprotein ILTAT 1.1BC">
    <location>
        <begin position="22"/>
        <end position="454"/>
    </location>
</feature>
<feature type="propeptide" id="PRO_0000036416" description="Removed in mature form" evidence="2">
    <location>
        <begin position="455"/>
        <end position="471"/>
    </location>
</feature>
<feature type="region of interest" description="Disordered" evidence="3">
    <location>
        <begin position="158"/>
        <end position="183"/>
    </location>
</feature>
<feature type="region of interest" description="Disordered" evidence="3">
    <location>
        <begin position="204"/>
        <end position="232"/>
    </location>
</feature>
<feature type="region of interest" description="Disordered" evidence="3">
    <location>
        <begin position="432"/>
        <end position="454"/>
    </location>
</feature>
<feature type="compositionally biased region" description="Polar residues" evidence="3">
    <location>
        <begin position="158"/>
        <end position="168"/>
    </location>
</feature>
<feature type="compositionally biased region" description="Basic and acidic residues" evidence="3">
    <location>
        <begin position="214"/>
        <end position="226"/>
    </location>
</feature>
<feature type="lipid moiety-binding region" description="GPI-anchor amidated serine" evidence="2">
    <location>
        <position position="454"/>
    </location>
</feature>
<feature type="glycosylation site" description="N-linked (GlcNAc...) asparagine" evidence="2">
    <location>
        <position position="130"/>
    </location>
</feature>
<feature type="glycosylation site" description="N-linked (GlcNAc...) asparagine" evidence="2">
    <location>
        <position position="220"/>
    </location>
</feature>
<feature type="glycosylation site" description="N-linked (GlcNAc...) asparagine" evidence="2">
    <location>
        <position position="260"/>
    </location>
</feature>
<feature type="glycosylation site" description="N-linked (GlcNAc...) asparagine" evidence="2">
    <location>
        <position position="450"/>
    </location>
</feature>
<feature type="disulfide bond" evidence="1">
    <location>
        <begin position="397"/>
        <end position="410"/>
    </location>
</feature>
<feature type="disulfide bond" evidence="1">
    <location>
        <begin position="406"/>
        <end position="421"/>
    </location>
</feature>